<organism>
    <name type="scientific">Staphylococcus aureus (strain COL)</name>
    <dbReference type="NCBI Taxonomy" id="93062"/>
    <lineage>
        <taxon>Bacteria</taxon>
        <taxon>Bacillati</taxon>
        <taxon>Bacillota</taxon>
        <taxon>Bacilli</taxon>
        <taxon>Bacillales</taxon>
        <taxon>Staphylococcaceae</taxon>
        <taxon>Staphylococcus</taxon>
    </lineage>
</organism>
<reference key="1">
    <citation type="journal article" date="2005" name="J. Bacteriol.">
        <title>Insights on evolution of virulence and resistance from the complete genome analysis of an early methicillin-resistant Staphylococcus aureus strain and a biofilm-producing methicillin-resistant Staphylococcus epidermidis strain.</title>
        <authorList>
            <person name="Gill S.R."/>
            <person name="Fouts D.E."/>
            <person name="Archer G.L."/>
            <person name="Mongodin E.F."/>
            <person name="DeBoy R.T."/>
            <person name="Ravel J."/>
            <person name="Paulsen I.T."/>
            <person name="Kolonay J.F."/>
            <person name="Brinkac L.M."/>
            <person name="Beanan M.J."/>
            <person name="Dodson R.J."/>
            <person name="Daugherty S.C."/>
            <person name="Madupu R."/>
            <person name="Angiuoli S.V."/>
            <person name="Durkin A.S."/>
            <person name="Haft D.H."/>
            <person name="Vamathevan J.J."/>
            <person name="Khouri H."/>
            <person name="Utterback T.R."/>
            <person name="Lee C."/>
            <person name="Dimitrov G."/>
            <person name="Jiang L."/>
            <person name="Qin H."/>
            <person name="Weidman J."/>
            <person name="Tran K."/>
            <person name="Kang K.H."/>
            <person name="Hance I.R."/>
            <person name="Nelson K.E."/>
            <person name="Fraser C.M."/>
        </authorList>
    </citation>
    <scope>NUCLEOTIDE SEQUENCE [LARGE SCALE GENOMIC DNA]</scope>
    <source>
        <strain>COL</strain>
    </source>
</reference>
<gene>
    <name evidence="1" type="primary">spx</name>
    <name type="ordered locus">SACOL1002</name>
</gene>
<sequence length="131" mass="15441">MVTLFTSPSCTSCRKAKAWLQEHDIPYTERNIFSEHLTIDEIKQILKMTEDGTDEIISTRSKTYQKLNVDIDSLPLQDLYSIIQDNPGLLRRPIILDNKRLQVGYNEDEIRRFLPRKVRTFQLQEAQRMVD</sequence>
<dbReference type="EMBL" id="CP000046">
    <property type="protein sequence ID" value="AAW36470.1"/>
    <property type="molecule type" value="Genomic_DNA"/>
</dbReference>
<dbReference type="SMR" id="Q5HH87"/>
<dbReference type="KEGG" id="sac:SACOL1002"/>
<dbReference type="HOGENOM" id="CLU_116644_1_1_9"/>
<dbReference type="Proteomes" id="UP000000530">
    <property type="component" value="Chromosome"/>
</dbReference>
<dbReference type="GO" id="GO:0005737">
    <property type="term" value="C:cytoplasm"/>
    <property type="evidence" value="ECO:0007669"/>
    <property type="project" value="UniProtKB-SubCell"/>
</dbReference>
<dbReference type="GO" id="GO:0045892">
    <property type="term" value="P:negative regulation of DNA-templated transcription"/>
    <property type="evidence" value="ECO:0007669"/>
    <property type="project" value="InterPro"/>
</dbReference>
<dbReference type="CDD" id="cd03032">
    <property type="entry name" value="ArsC_Spx"/>
    <property type="match status" value="1"/>
</dbReference>
<dbReference type="Gene3D" id="3.40.30.10">
    <property type="entry name" value="Glutaredoxin"/>
    <property type="match status" value="1"/>
</dbReference>
<dbReference type="HAMAP" id="MF_01132">
    <property type="entry name" value="Spx"/>
    <property type="match status" value="1"/>
</dbReference>
<dbReference type="InterPro" id="IPR006660">
    <property type="entry name" value="Arsenate_reductase-like"/>
</dbReference>
<dbReference type="InterPro" id="IPR023731">
    <property type="entry name" value="Spx"/>
</dbReference>
<dbReference type="InterPro" id="IPR036249">
    <property type="entry name" value="Thioredoxin-like_sf"/>
</dbReference>
<dbReference type="InterPro" id="IPR006504">
    <property type="entry name" value="Tscrpt_reg_Spx/MgsR"/>
</dbReference>
<dbReference type="NCBIfam" id="TIGR01617">
    <property type="entry name" value="arsC_related"/>
    <property type="match status" value="1"/>
</dbReference>
<dbReference type="NCBIfam" id="NF002459">
    <property type="entry name" value="PRK01655.1"/>
    <property type="match status" value="1"/>
</dbReference>
<dbReference type="NCBIfam" id="NF009210">
    <property type="entry name" value="PRK12559.1"/>
    <property type="match status" value="1"/>
</dbReference>
<dbReference type="PANTHER" id="PTHR30041">
    <property type="entry name" value="ARSENATE REDUCTASE"/>
    <property type="match status" value="1"/>
</dbReference>
<dbReference type="PANTHER" id="PTHR30041:SF7">
    <property type="entry name" value="GLOBAL TRANSCRIPTIONAL REGULATOR SPX"/>
    <property type="match status" value="1"/>
</dbReference>
<dbReference type="Pfam" id="PF03960">
    <property type="entry name" value="ArsC"/>
    <property type="match status" value="1"/>
</dbReference>
<dbReference type="SUPFAM" id="SSF52833">
    <property type="entry name" value="Thioredoxin-like"/>
    <property type="match status" value="1"/>
</dbReference>
<dbReference type="PROSITE" id="PS51353">
    <property type="entry name" value="ARSC"/>
    <property type="match status" value="1"/>
</dbReference>
<accession>Q5HH87</accession>
<evidence type="ECO:0000255" key="1">
    <source>
        <dbReference type="HAMAP-Rule" id="MF_01132"/>
    </source>
</evidence>
<proteinExistence type="inferred from homology"/>
<protein>
    <recommendedName>
        <fullName evidence="1">Global transcriptional regulator Spx</fullName>
    </recommendedName>
</protein>
<keyword id="KW-0963">Cytoplasm</keyword>
<keyword id="KW-1015">Disulfide bond</keyword>
<keyword id="KW-0676">Redox-active center</keyword>
<keyword id="KW-0804">Transcription</keyword>
<keyword id="KW-0805">Transcription regulation</keyword>
<comment type="function">
    <text evidence="1">Global transcriptional regulator that plays a key role in stress response and exerts either positive or negative regulation of genes. Acts by interacting with the C-terminal domain of the alpha subunit of the RNA polymerase (RNAP). This interaction can enhance binding of RNAP to the promoter region of target genes and stimulate their transcription, or block interaction of RNAP with activator.</text>
</comment>
<comment type="subunit">
    <text evidence="1">Interacts with the C-terminal domain of the alpha subunit of the RNAP.</text>
</comment>
<comment type="subcellular location">
    <subcellularLocation>
        <location evidence="1">Cytoplasm</location>
    </subcellularLocation>
</comment>
<comment type="similarity">
    <text evidence="1">Belongs to the ArsC family. Spx subfamily.</text>
</comment>
<feature type="chain" id="PRO_0000162562" description="Global transcriptional regulator Spx">
    <location>
        <begin position="1"/>
        <end position="131"/>
    </location>
</feature>
<feature type="disulfide bond" description="Redox-active" evidence="1">
    <location>
        <begin position="10"/>
        <end position="13"/>
    </location>
</feature>
<name>SPX_STAAC</name>